<proteinExistence type="inferred from homology"/>
<feature type="chain" id="PRO_1000115214" description="Homoserine O-succinyltransferase">
    <location>
        <begin position="1"/>
        <end position="381"/>
    </location>
</feature>
<feature type="domain" description="AB hydrolase-1" evidence="1">
    <location>
        <begin position="45"/>
        <end position="360"/>
    </location>
</feature>
<feature type="active site" description="Nucleophile" evidence="1">
    <location>
        <position position="151"/>
    </location>
</feature>
<feature type="active site" evidence="1">
    <location>
        <position position="321"/>
    </location>
</feature>
<feature type="active site" evidence="1">
    <location>
        <position position="354"/>
    </location>
</feature>
<feature type="binding site" evidence="1">
    <location>
        <position position="221"/>
    </location>
    <ligand>
        <name>substrate</name>
    </ligand>
</feature>
<feature type="binding site" evidence="1">
    <location>
        <position position="355"/>
    </location>
    <ligand>
        <name>substrate</name>
    </ligand>
</feature>
<feature type="site" description="Important for acyl-CoA specificity" evidence="1">
    <location>
        <position position="323"/>
    </location>
</feature>
<accession>B4E7Y5</accession>
<comment type="function">
    <text evidence="1">Transfers a succinyl group from succinyl-CoA to L-homoserine, forming succinyl-L-homoserine.</text>
</comment>
<comment type="catalytic activity">
    <reaction evidence="1">
        <text>L-homoserine + succinyl-CoA = O-succinyl-L-homoserine + CoA</text>
        <dbReference type="Rhea" id="RHEA:22008"/>
        <dbReference type="ChEBI" id="CHEBI:57287"/>
        <dbReference type="ChEBI" id="CHEBI:57292"/>
        <dbReference type="ChEBI" id="CHEBI:57476"/>
        <dbReference type="ChEBI" id="CHEBI:57661"/>
        <dbReference type="EC" id="2.3.1.46"/>
    </reaction>
</comment>
<comment type="pathway">
    <text evidence="1">Amino-acid biosynthesis; L-methionine biosynthesis via de novo pathway; O-succinyl-L-homoserine from L-homoserine: step 1/1.</text>
</comment>
<comment type="subunit">
    <text evidence="1">Homodimer.</text>
</comment>
<comment type="subcellular location">
    <subcellularLocation>
        <location evidence="1">Cytoplasm</location>
    </subcellularLocation>
</comment>
<comment type="similarity">
    <text evidence="1">Belongs to the AB hydrolase superfamily. MetX family.</text>
</comment>
<evidence type="ECO:0000255" key="1">
    <source>
        <dbReference type="HAMAP-Rule" id="MF_00296"/>
    </source>
</evidence>
<dbReference type="EC" id="2.3.1.46" evidence="1"/>
<dbReference type="EMBL" id="AM747720">
    <property type="protein sequence ID" value="CAR50804.1"/>
    <property type="molecule type" value="Genomic_DNA"/>
</dbReference>
<dbReference type="SMR" id="B4E7Y5"/>
<dbReference type="ESTHER" id="burca-metx">
    <property type="family name" value="Homoserine_transacetylase"/>
</dbReference>
<dbReference type="KEGG" id="bcj:BCAL0493"/>
<dbReference type="eggNOG" id="COG2021">
    <property type="taxonomic scope" value="Bacteria"/>
</dbReference>
<dbReference type="HOGENOM" id="CLU_028760_1_2_4"/>
<dbReference type="BioCyc" id="BCEN216591:G1G1V-561-MONOMER"/>
<dbReference type="UniPathway" id="UPA00051">
    <property type="reaction ID" value="UER00075"/>
</dbReference>
<dbReference type="Proteomes" id="UP000001035">
    <property type="component" value="Chromosome 1"/>
</dbReference>
<dbReference type="GO" id="GO:0005737">
    <property type="term" value="C:cytoplasm"/>
    <property type="evidence" value="ECO:0007669"/>
    <property type="project" value="UniProtKB-SubCell"/>
</dbReference>
<dbReference type="GO" id="GO:0004414">
    <property type="term" value="F:homoserine O-acetyltransferase activity"/>
    <property type="evidence" value="ECO:0007669"/>
    <property type="project" value="TreeGrafter"/>
</dbReference>
<dbReference type="GO" id="GO:0008899">
    <property type="term" value="F:homoserine O-succinyltransferase activity"/>
    <property type="evidence" value="ECO:0007669"/>
    <property type="project" value="UniProtKB-UniRule"/>
</dbReference>
<dbReference type="GO" id="GO:0009092">
    <property type="term" value="P:homoserine metabolic process"/>
    <property type="evidence" value="ECO:0007669"/>
    <property type="project" value="TreeGrafter"/>
</dbReference>
<dbReference type="GO" id="GO:0009086">
    <property type="term" value="P:methionine biosynthetic process"/>
    <property type="evidence" value="ECO:0007669"/>
    <property type="project" value="UniProtKB-UniRule"/>
</dbReference>
<dbReference type="FunFam" id="1.10.1740.110:FF:000001">
    <property type="entry name" value="Homoserine O-acetyltransferase"/>
    <property type="match status" value="1"/>
</dbReference>
<dbReference type="Gene3D" id="1.10.1740.110">
    <property type="match status" value="1"/>
</dbReference>
<dbReference type="Gene3D" id="3.40.50.1820">
    <property type="entry name" value="alpha/beta hydrolase"/>
    <property type="match status" value="1"/>
</dbReference>
<dbReference type="HAMAP" id="MF_00296">
    <property type="entry name" value="MetX_acyltransf"/>
    <property type="match status" value="1"/>
</dbReference>
<dbReference type="InterPro" id="IPR000073">
    <property type="entry name" value="AB_hydrolase_1"/>
</dbReference>
<dbReference type="InterPro" id="IPR029058">
    <property type="entry name" value="AB_hydrolase_fold"/>
</dbReference>
<dbReference type="InterPro" id="IPR008220">
    <property type="entry name" value="HAT_MetX-like"/>
</dbReference>
<dbReference type="NCBIfam" id="TIGR01392">
    <property type="entry name" value="homoserO_Ac_trn"/>
    <property type="match status" value="1"/>
</dbReference>
<dbReference type="NCBIfam" id="NF001209">
    <property type="entry name" value="PRK00175.1"/>
    <property type="match status" value="1"/>
</dbReference>
<dbReference type="PANTHER" id="PTHR32268">
    <property type="entry name" value="HOMOSERINE O-ACETYLTRANSFERASE"/>
    <property type="match status" value="1"/>
</dbReference>
<dbReference type="PANTHER" id="PTHR32268:SF11">
    <property type="entry name" value="HOMOSERINE O-ACETYLTRANSFERASE"/>
    <property type="match status" value="1"/>
</dbReference>
<dbReference type="Pfam" id="PF00561">
    <property type="entry name" value="Abhydrolase_1"/>
    <property type="match status" value="1"/>
</dbReference>
<dbReference type="PIRSF" id="PIRSF000443">
    <property type="entry name" value="Homoser_Ac_trans"/>
    <property type="match status" value="1"/>
</dbReference>
<dbReference type="SUPFAM" id="SSF53474">
    <property type="entry name" value="alpha/beta-Hydrolases"/>
    <property type="match status" value="1"/>
</dbReference>
<keyword id="KW-0012">Acyltransferase</keyword>
<keyword id="KW-0028">Amino-acid biosynthesis</keyword>
<keyword id="KW-0963">Cytoplasm</keyword>
<keyword id="KW-0486">Methionine biosynthesis</keyword>
<keyword id="KW-0808">Transferase</keyword>
<sequence>MESIGIVAPQTMHFAEPLRLQSGSVIGNYQLVVETYGELNAARSNAVLVCHALNASHHVAGVYADDPRSTGWWDNMVGPGKPLDTNRFFVIGVNNLGSCFGSTGPMSIDPSTGKPYGAKFPVVTVEDWVHAQARVADAFGIERFAAVMGGSLGGMQALAWSLMYPERVAHCIDIASTPKLSAQNIAFNEVARSAILSDPDFHGGDYYAHGVKPKRGLRVARMIGHITYLSDDDMAEKFGRALRRADGALDAYNFSFDVEFEVESYLRYQGDKFADYFDANTYLLITRALDYFDPAKAFDGNLTAALAHTQAKYLIASFSTDWRFAPARSREIVKALLDNKRTVSYAEIDAPHGHDAFLLDDARYHNLIRAYYERIANEVGA</sequence>
<name>METXS_BURCJ</name>
<gene>
    <name evidence="1" type="primary">metXS</name>
    <name type="ordered locus">BceJ2315_04910</name>
    <name type="ORF">BCAL0493</name>
</gene>
<reference key="1">
    <citation type="journal article" date="2009" name="J. Bacteriol.">
        <title>The genome of Burkholderia cenocepacia J2315, an epidemic pathogen of cystic fibrosis patients.</title>
        <authorList>
            <person name="Holden M.T."/>
            <person name="Seth-Smith H.M."/>
            <person name="Crossman L.C."/>
            <person name="Sebaihia M."/>
            <person name="Bentley S.D."/>
            <person name="Cerdeno-Tarraga A.M."/>
            <person name="Thomson N.R."/>
            <person name="Bason N."/>
            <person name="Quail M.A."/>
            <person name="Sharp S."/>
            <person name="Cherevach I."/>
            <person name="Churcher C."/>
            <person name="Goodhead I."/>
            <person name="Hauser H."/>
            <person name="Holroyd N."/>
            <person name="Mungall K."/>
            <person name="Scott P."/>
            <person name="Walker D."/>
            <person name="White B."/>
            <person name="Rose H."/>
            <person name="Iversen P."/>
            <person name="Mil-Homens D."/>
            <person name="Rocha E.P."/>
            <person name="Fialho A.M."/>
            <person name="Baldwin A."/>
            <person name="Dowson C."/>
            <person name="Barrell B.G."/>
            <person name="Govan J.R."/>
            <person name="Vandamme P."/>
            <person name="Hart C.A."/>
            <person name="Mahenthiralingam E."/>
            <person name="Parkhill J."/>
        </authorList>
    </citation>
    <scope>NUCLEOTIDE SEQUENCE [LARGE SCALE GENOMIC DNA]</scope>
    <source>
        <strain>ATCC BAA-245 / DSM 16553 / LMG 16656 / NCTC 13227 / J2315 / CF5610</strain>
    </source>
</reference>
<organism>
    <name type="scientific">Burkholderia cenocepacia (strain ATCC BAA-245 / DSM 16553 / LMG 16656 / NCTC 13227 / J2315 / CF5610)</name>
    <name type="common">Burkholderia cepacia (strain J2315)</name>
    <dbReference type="NCBI Taxonomy" id="216591"/>
    <lineage>
        <taxon>Bacteria</taxon>
        <taxon>Pseudomonadati</taxon>
        <taxon>Pseudomonadota</taxon>
        <taxon>Betaproteobacteria</taxon>
        <taxon>Burkholderiales</taxon>
        <taxon>Burkholderiaceae</taxon>
        <taxon>Burkholderia</taxon>
        <taxon>Burkholderia cepacia complex</taxon>
    </lineage>
</organism>
<protein>
    <recommendedName>
        <fullName evidence="1">Homoserine O-succinyltransferase</fullName>
        <shortName evidence="1">HST</shortName>
        <ecNumber evidence="1">2.3.1.46</ecNumber>
    </recommendedName>
    <alternativeName>
        <fullName evidence="1">Homoserine transsuccinylase</fullName>
        <shortName evidence="1">HTS</shortName>
    </alternativeName>
</protein>